<keyword id="KW-0002">3D-structure</keyword>
<keyword id="KW-0133">Cell shape</keyword>
<keyword id="KW-0961">Cell wall biogenesis/degradation</keyword>
<keyword id="KW-0413">Isomerase</keyword>
<keyword id="KW-0573">Peptidoglycan synthesis</keyword>
<keyword id="KW-1185">Reference proteome</keyword>
<comment type="function">
    <text evidence="2">Provides the (R)-glutamate required for cell wall biosynthesis.</text>
</comment>
<comment type="catalytic activity">
    <reaction evidence="2 3 4">
        <text>L-glutamate = D-glutamate</text>
        <dbReference type="Rhea" id="RHEA:12813"/>
        <dbReference type="ChEBI" id="CHEBI:29985"/>
        <dbReference type="ChEBI" id="CHEBI:29986"/>
        <dbReference type="EC" id="5.1.1.3"/>
    </reaction>
</comment>
<comment type="pathway">
    <text evidence="2">Cell wall biogenesis; peptidoglycan biosynthesis.</text>
</comment>
<comment type="subunit">
    <text evidence="3">Homodimer.</text>
</comment>
<comment type="interaction">
    <interactant intactId="EBI-15642753">
        <id>Q836J0</id>
    </interactant>
    <interactant intactId="EBI-15642753">
        <id>Q836J0</id>
        <label>murI</label>
    </interactant>
    <organismsDiffer>false</organismsDiffer>
    <experiments>4</experiments>
</comment>
<comment type="similarity">
    <text evidence="2">Belongs to the aspartate/glutamate racemases family.</text>
</comment>
<evidence type="ECO:0000250" key="1">
    <source>
        <dbReference type="UniProtKB" id="O58403"/>
    </source>
</evidence>
<evidence type="ECO:0000255" key="2">
    <source>
        <dbReference type="HAMAP-Rule" id="MF_00258"/>
    </source>
</evidence>
<evidence type="ECO:0000269" key="3">
    <source>
    </source>
</evidence>
<evidence type="ECO:0000269" key="4">
    <source>
    </source>
</evidence>
<evidence type="ECO:0007744" key="5">
    <source>
        <dbReference type="PDB" id="2JFO"/>
    </source>
</evidence>
<evidence type="ECO:0007744" key="6">
    <source>
        <dbReference type="PDB" id="2JFP"/>
    </source>
</evidence>
<evidence type="ECO:0007744" key="7">
    <source>
        <dbReference type="PDB" id="2VVT"/>
    </source>
</evidence>
<evidence type="ECO:0007829" key="8">
    <source>
        <dbReference type="PDB" id="2JFP"/>
    </source>
</evidence>
<evidence type="ECO:0007829" key="9">
    <source>
        <dbReference type="PDB" id="2VVT"/>
    </source>
</evidence>
<reference key="1">
    <citation type="journal article" date="2003" name="Science">
        <title>Role of mobile DNA in the evolution of vancomycin-resistant Enterococcus faecalis.</title>
        <authorList>
            <person name="Paulsen I.T."/>
            <person name="Banerjei L."/>
            <person name="Myers G.S.A."/>
            <person name="Nelson K.E."/>
            <person name="Seshadri R."/>
            <person name="Read T.D."/>
            <person name="Fouts D.E."/>
            <person name="Eisen J.A."/>
            <person name="Gill S.R."/>
            <person name="Heidelberg J.F."/>
            <person name="Tettelin H."/>
            <person name="Dodson R.J."/>
            <person name="Umayam L.A."/>
            <person name="Brinkac L.M."/>
            <person name="Beanan M.J."/>
            <person name="Daugherty S.C."/>
            <person name="DeBoy R.T."/>
            <person name="Durkin S.A."/>
            <person name="Kolonay J.F."/>
            <person name="Madupu R."/>
            <person name="Nelson W.C."/>
            <person name="Vamathevan J.J."/>
            <person name="Tran B."/>
            <person name="Upton J."/>
            <person name="Hansen T."/>
            <person name="Shetty J."/>
            <person name="Khouri H.M."/>
            <person name="Utterback T.R."/>
            <person name="Radune D."/>
            <person name="Ketchum K.A."/>
            <person name="Dougherty B.A."/>
            <person name="Fraser C.M."/>
        </authorList>
    </citation>
    <scope>NUCLEOTIDE SEQUENCE [LARGE SCALE GENOMIC DNA]</scope>
    <source>
        <strain>ATCC 700802 / V583</strain>
    </source>
</reference>
<reference key="2">
    <citation type="journal article" date="2007" name="Nature">
        <title>Exploitation of structural and regulatory diversity in glutamate racemases.</title>
        <authorList>
            <person name="Lundqvist T."/>
            <person name="Fisher S.L."/>
            <person name="Kern G."/>
            <person name="Folmer R.H."/>
            <person name="Xue Y."/>
            <person name="Newton D.T."/>
            <person name="Keating T.A."/>
            <person name="Alm R.A."/>
            <person name="de Jonge B.L."/>
        </authorList>
    </citation>
    <scope>X-RAY CRYSTALLOGRAPHY (1.98 ANGSTROMS) IN COMPLEX WITH GLUTAMATE</scope>
    <scope>CATALYTIC ACTIVITY</scope>
    <scope>SUBUNIT</scope>
</reference>
<reference key="3">
    <citation type="journal article" date="2008" name="Bioorg. Med. Chem. Lett.">
        <title>Exploring 9-benzyl purines as inhibitors of glutamate racemase (MurI) in Gram-positive bacteria.</title>
        <authorList>
            <person name="Geng B."/>
            <person name="Breault G."/>
            <person name="Comita-Prevoir J."/>
            <person name="Petrichko R."/>
            <person name="Eyermann C."/>
            <person name="Lundqvist T."/>
            <person name="Doig P."/>
            <person name="Gorseth E."/>
            <person name="Noonan B."/>
        </authorList>
    </citation>
    <scope>X-RAY CRYSTALLOGRAPHY (1.65 ANGSTROMS) OF 1-270 IN COMPLEX WITH D-GLUTAMATE</scope>
    <scope>CATALYTIC ACTIVITY</scope>
</reference>
<dbReference type="EC" id="5.1.1.3" evidence="2 3 4"/>
<dbReference type="EMBL" id="AE016830">
    <property type="protein sequence ID" value="AAO80921.1"/>
    <property type="molecule type" value="Genomic_DNA"/>
</dbReference>
<dbReference type="RefSeq" id="NP_814851.1">
    <property type="nucleotide sequence ID" value="NC_004668.1"/>
</dbReference>
<dbReference type="PDB" id="2JFO">
    <property type="method" value="X-ray"/>
    <property type="resolution" value="2.50 A"/>
    <property type="chains" value="A/B=1-273"/>
</dbReference>
<dbReference type="PDB" id="2JFP">
    <property type="method" value="X-ray"/>
    <property type="resolution" value="1.98 A"/>
    <property type="chains" value="A/B=1-273"/>
</dbReference>
<dbReference type="PDB" id="2VVT">
    <property type="method" value="X-ray"/>
    <property type="resolution" value="1.65 A"/>
    <property type="chains" value="A/B=1-270"/>
</dbReference>
<dbReference type="PDBsum" id="2JFO"/>
<dbReference type="PDBsum" id="2JFP"/>
<dbReference type="PDBsum" id="2VVT"/>
<dbReference type="SMR" id="Q836J0"/>
<dbReference type="DIP" id="DIP-60301N"/>
<dbReference type="STRING" id="226185.EF_1121"/>
<dbReference type="BindingDB" id="Q836J0"/>
<dbReference type="ChEMBL" id="CHEMBL5298"/>
<dbReference type="DrugBank" id="DB07937">
    <property type="generic name" value="2-butoxy-9-(2,6-difluorobenzyl)-N-(2-morpholin-4-ylethyl)-9H-purin-6-amine"/>
</dbReference>
<dbReference type="EnsemblBacteria" id="AAO80921">
    <property type="protein sequence ID" value="AAO80921"/>
    <property type="gene ID" value="EF_1121"/>
</dbReference>
<dbReference type="KEGG" id="efa:EF1121"/>
<dbReference type="PATRIC" id="fig|226185.45.peg.2374"/>
<dbReference type="eggNOG" id="COG0796">
    <property type="taxonomic scope" value="Bacteria"/>
</dbReference>
<dbReference type="HOGENOM" id="CLU_052344_0_2_9"/>
<dbReference type="BRENDA" id="5.1.1.3">
    <property type="organism ID" value="2095"/>
</dbReference>
<dbReference type="SABIO-RK" id="Q836J0"/>
<dbReference type="UniPathway" id="UPA00219"/>
<dbReference type="EvolutionaryTrace" id="Q836J0"/>
<dbReference type="PRO" id="PR:Q836J0"/>
<dbReference type="Proteomes" id="UP000001415">
    <property type="component" value="Chromosome"/>
</dbReference>
<dbReference type="GO" id="GO:0008881">
    <property type="term" value="F:glutamate racemase activity"/>
    <property type="evidence" value="ECO:0007669"/>
    <property type="project" value="UniProtKB-UniRule"/>
</dbReference>
<dbReference type="GO" id="GO:0042802">
    <property type="term" value="F:identical protein binding"/>
    <property type="evidence" value="ECO:0000353"/>
    <property type="project" value="IntAct"/>
</dbReference>
<dbReference type="GO" id="GO:0071555">
    <property type="term" value="P:cell wall organization"/>
    <property type="evidence" value="ECO:0007669"/>
    <property type="project" value="UniProtKB-KW"/>
</dbReference>
<dbReference type="GO" id="GO:0009252">
    <property type="term" value="P:peptidoglycan biosynthetic process"/>
    <property type="evidence" value="ECO:0007669"/>
    <property type="project" value="UniProtKB-UniRule"/>
</dbReference>
<dbReference type="GO" id="GO:0008360">
    <property type="term" value="P:regulation of cell shape"/>
    <property type="evidence" value="ECO:0007669"/>
    <property type="project" value="UniProtKB-KW"/>
</dbReference>
<dbReference type="FunFam" id="3.40.50.1860:FF:000002">
    <property type="entry name" value="Glutamate racemase"/>
    <property type="match status" value="1"/>
</dbReference>
<dbReference type="Gene3D" id="3.40.50.1860">
    <property type="match status" value="2"/>
</dbReference>
<dbReference type="HAMAP" id="MF_00258">
    <property type="entry name" value="Glu_racemase"/>
    <property type="match status" value="1"/>
</dbReference>
<dbReference type="InterPro" id="IPR015942">
    <property type="entry name" value="Asp/Glu/hydantoin_racemase"/>
</dbReference>
<dbReference type="InterPro" id="IPR001920">
    <property type="entry name" value="Asp/Glu_race"/>
</dbReference>
<dbReference type="InterPro" id="IPR018187">
    <property type="entry name" value="Asp/Glu_racemase_AS_1"/>
</dbReference>
<dbReference type="InterPro" id="IPR033134">
    <property type="entry name" value="Asp/Glu_racemase_AS_2"/>
</dbReference>
<dbReference type="InterPro" id="IPR004391">
    <property type="entry name" value="Glu_race"/>
</dbReference>
<dbReference type="NCBIfam" id="TIGR00067">
    <property type="entry name" value="glut_race"/>
    <property type="match status" value="1"/>
</dbReference>
<dbReference type="NCBIfam" id="NF002035">
    <property type="entry name" value="PRK00865.1-3"/>
    <property type="match status" value="1"/>
</dbReference>
<dbReference type="PANTHER" id="PTHR21198">
    <property type="entry name" value="GLUTAMATE RACEMASE"/>
    <property type="match status" value="1"/>
</dbReference>
<dbReference type="PANTHER" id="PTHR21198:SF2">
    <property type="entry name" value="GLUTAMATE RACEMASE"/>
    <property type="match status" value="1"/>
</dbReference>
<dbReference type="Pfam" id="PF01177">
    <property type="entry name" value="Asp_Glu_race"/>
    <property type="match status" value="1"/>
</dbReference>
<dbReference type="SUPFAM" id="SSF53681">
    <property type="entry name" value="Aspartate/glutamate racemase"/>
    <property type="match status" value="2"/>
</dbReference>
<dbReference type="PROSITE" id="PS00923">
    <property type="entry name" value="ASP_GLU_RACEMASE_1"/>
    <property type="match status" value="1"/>
</dbReference>
<dbReference type="PROSITE" id="PS00924">
    <property type="entry name" value="ASP_GLU_RACEMASE_2"/>
    <property type="match status" value="1"/>
</dbReference>
<organism>
    <name type="scientific">Enterococcus faecalis (strain ATCC 700802 / V583)</name>
    <dbReference type="NCBI Taxonomy" id="226185"/>
    <lineage>
        <taxon>Bacteria</taxon>
        <taxon>Bacillati</taxon>
        <taxon>Bacillota</taxon>
        <taxon>Bacilli</taxon>
        <taxon>Lactobacillales</taxon>
        <taxon>Enterococcaceae</taxon>
        <taxon>Enterococcus</taxon>
    </lineage>
</organism>
<gene>
    <name evidence="2" type="primary">murI</name>
    <name type="ordered locus">EF_1121</name>
</gene>
<name>MURI_ENTFA</name>
<feature type="chain" id="PRO_1000047564" description="Glutamate racemase">
    <location>
        <begin position="1"/>
        <end position="273"/>
    </location>
</feature>
<feature type="active site" description="Proton donor/acceptor" evidence="1 2">
    <location>
        <position position="74"/>
    </location>
</feature>
<feature type="active site" description="Proton donor/acceptor" evidence="1 2">
    <location>
        <position position="185"/>
    </location>
</feature>
<feature type="binding site" evidence="2 3 4 5 6 7">
    <location>
        <begin position="11"/>
        <end position="12"/>
    </location>
    <ligand>
        <name>substrate</name>
    </ligand>
</feature>
<feature type="binding site" evidence="2 3 4 5 6 7">
    <location>
        <begin position="43"/>
        <end position="44"/>
    </location>
    <ligand>
        <name>substrate</name>
    </ligand>
</feature>
<feature type="binding site" evidence="2 3 4 5 6 7">
    <location>
        <begin position="75"/>
        <end position="76"/>
    </location>
    <ligand>
        <name>substrate</name>
    </ligand>
</feature>
<feature type="binding site" evidence="2 3 4 5 6 7">
    <location>
        <begin position="186"/>
        <end position="187"/>
    </location>
    <ligand>
        <name>substrate</name>
    </ligand>
</feature>
<feature type="helix" evidence="9">
    <location>
        <begin position="2"/>
        <end position="4"/>
    </location>
</feature>
<feature type="strand" evidence="9">
    <location>
        <begin position="7"/>
        <end position="14"/>
    </location>
</feature>
<feature type="helix" evidence="9">
    <location>
        <begin position="17"/>
        <end position="26"/>
    </location>
</feature>
<feature type="strand" evidence="9">
    <location>
        <begin position="32"/>
        <end position="36"/>
    </location>
</feature>
<feature type="turn" evidence="9">
    <location>
        <begin position="38"/>
        <end position="40"/>
    </location>
</feature>
<feature type="helix" evidence="9">
    <location>
        <begin position="48"/>
        <end position="63"/>
    </location>
</feature>
<feature type="turn" evidence="9">
    <location>
        <begin position="64"/>
        <end position="66"/>
    </location>
</feature>
<feature type="strand" evidence="9">
    <location>
        <begin position="68"/>
        <end position="72"/>
    </location>
</feature>
<feature type="helix" evidence="9">
    <location>
        <begin position="75"/>
        <end position="88"/>
    </location>
</feature>
<feature type="strand" evidence="9">
    <location>
        <begin position="93"/>
        <end position="97"/>
    </location>
</feature>
<feature type="helix" evidence="9">
    <location>
        <begin position="98"/>
        <end position="107"/>
    </location>
</feature>
<feature type="strand" evidence="9">
    <location>
        <begin position="109"/>
        <end position="117"/>
    </location>
</feature>
<feature type="helix" evidence="9">
    <location>
        <begin position="119"/>
        <end position="123"/>
    </location>
</feature>
<feature type="helix" evidence="9">
    <location>
        <begin position="126"/>
        <end position="132"/>
    </location>
</feature>
<feature type="strand" evidence="9">
    <location>
        <begin position="138"/>
        <end position="144"/>
    </location>
</feature>
<feature type="helix" evidence="9">
    <location>
        <begin position="148"/>
        <end position="153"/>
    </location>
</feature>
<feature type="helix" evidence="9">
    <location>
        <begin position="160"/>
        <end position="170"/>
    </location>
</feature>
<feature type="helix" evidence="9">
    <location>
        <begin position="171"/>
        <end position="173"/>
    </location>
</feature>
<feature type="turn" evidence="8">
    <location>
        <begin position="174"/>
        <end position="176"/>
    </location>
</feature>
<feature type="strand" evidence="9">
    <location>
        <begin position="179"/>
        <end position="183"/>
    </location>
</feature>
<feature type="helix" evidence="9">
    <location>
        <begin position="188"/>
        <end position="191"/>
    </location>
</feature>
<feature type="helix" evidence="9">
    <location>
        <begin position="192"/>
        <end position="199"/>
    </location>
</feature>
<feature type="strand" evidence="9">
    <location>
        <begin position="204"/>
        <end position="207"/>
    </location>
</feature>
<feature type="helix" evidence="9">
    <location>
        <begin position="208"/>
        <end position="222"/>
    </location>
</feature>
<feature type="strand" evidence="9">
    <location>
        <begin position="237"/>
        <end position="242"/>
    </location>
</feature>
<feature type="helix" evidence="9">
    <location>
        <begin position="244"/>
        <end position="255"/>
    </location>
</feature>
<feature type="strand" evidence="9">
    <location>
        <begin position="262"/>
        <end position="264"/>
    </location>
</feature>
<proteinExistence type="evidence at protein level"/>
<accession>Q836J0</accession>
<protein>
    <recommendedName>
        <fullName evidence="2">Glutamate racemase</fullName>
        <ecNumber evidence="2 3 4">5.1.1.3</ecNumber>
    </recommendedName>
</protein>
<sequence>MSNQEAIGLIDSGVGGLTVLKEALKQLPNERLIYLGDTARCPYGPRPAEQVVQFTWEMADFLLKKRIKMLVIACNTATAVALEEIKAALPIPVVGVILPGARAAVKVTKNNKIGVIGTLGTIKSASYEIAIKSKAPTIEVTSLDCPKFVPIVESNQYRSSVAKKIVAETLQALQLKGLDTLILGCTHYPLLRPVIQNVMGSHVTLIDSGAETVGEVSMLLDYFDIAHTPEAPTQPHEFYTTGSAKMFEEIASSWLGIENLKAQQIHLGGNEND</sequence>